<sequence length="108" mass="12670">MTVRLGQIMHVNPNYYDEYEKRHSDLPVKFPEMKKALKEAGAHNYSIYLDKKTGTLFAYLEVDDMDKYKAIAEMDACKEWWAYMAPLMDTNPDKSPVTFDLPEVFHLD</sequence>
<accession>Q1WRE3</accession>
<geneLocation type="plasmid">
    <name>pMP118</name>
</geneLocation>
<proteinExistence type="inferred from homology"/>
<keyword id="KW-0119">Carbohydrate metabolism</keyword>
<keyword id="KW-0963">Cytoplasm</keyword>
<keyword id="KW-0413">Isomerase</keyword>
<keyword id="KW-0614">Plasmid</keyword>
<keyword id="KW-1185">Reference proteome</keyword>
<keyword id="KW-0684">Rhamnose metabolism</keyword>
<dbReference type="EC" id="5.1.3.32" evidence="1"/>
<dbReference type="EMBL" id="CP000234">
    <property type="protein sequence ID" value="ABE00555.1"/>
    <property type="molecule type" value="Genomic_DNA"/>
</dbReference>
<dbReference type="RefSeq" id="WP_003699292.1">
    <property type="nucleotide sequence ID" value="NC_007930.1"/>
</dbReference>
<dbReference type="RefSeq" id="YP_536638.1">
    <property type="nucleotide sequence ID" value="NC_007930.1"/>
</dbReference>
<dbReference type="SMR" id="Q1WRE3"/>
<dbReference type="KEGG" id="lsl:LSL_1753"/>
<dbReference type="PATRIC" id="fig|362948.14.peg.1858"/>
<dbReference type="HOGENOM" id="CLU_100689_2_0_9"/>
<dbReference type="OrthoDB" id="9799608at2"/>
<dbReference type="UniPathway" id="UPA00125"/>
<dbReference type="Proteomes" id="UP000006559">
    <property type="component" value="Plasmid pMP118"/>
</dbReference>
<dbReference type="GO" id="GO:0005737">
    <property type="term" value="C:cytoplasm"/>
    <property type="evidence" value="ECO:0007669"/>
    <property type="project" value="UniProtKB-SubCell"/>
</dbReference>
<dbReference type="GO" id="GO:0062192">
    <property type="term" value="F:L-rhamnose mutarotase activity"/>
    <property type="evidence" value="ECO:0007669"/>
    <property type="project" value="UniProtKB-EC"/>
</dbReference>
<dbReference type="GO" id="GO:0019301">
    <property type="term" value="P:rhamnose catabolic process"/>
    <property type="evidence" value="ECO:0007669"/>
    <property type="project" value="TreeGrafter"/>
</dbReference>
<dbReference type="Gene3D" id="3.30.70.100">
    <property type="match status" value="1"/>
</dbReference>
<dbReference type="HAMAP" id="MF_01663">
    <property type="entry name" value="L_rham_rotase"/>
    <property type="match status" value="1"/>
</dbReference>
<dbReference type="InterPro" id="IPR011008">
    <property type="entry name" value="Dimeric_a/b-barrel"/>
</dbReference>
<dbReference type="InterPro" id="IPR013448">
    <property type="entry name" value="L-rhamnose_mutarotase"/>
</dbReference>
<dbReference type="InterPro" id="IPR008000">
    <property type="entry name" value="Rham/fucose_mutarotase"/>
</dbReference>
<dbReference type="NCBIfam" id="TIGR02625">
    <property type="entry name" value="YiiL_rotase"/>
    <property type="match status" value="1"/>
</dbReference>
<dbReference type="PANTHER" id="PTHR34389">
    <property type="entry name" value="L-RHAMNOSE MUTAROTASE"/>
    <property type="match status" value="1"/>
</dbReference>
<dbReference type="PANTHER" id="PTHR34389:SF2">
    <property type="entry name" value="L-RHAMNOSE MUTAROTASE"/>
    <property type="match status" value="1"/>
</dbReference>
<dbReference type="Pfam" id="PF05336">
    <property type="entry name" value="rhaM"/>
    <property type="match status" value="1"/>
</dbReference>
<dbReference type="SUPFAM" id="SSF54909">
    <property type="entry name" value="Dimeric alpha+beta barrel"/>
    <property type="match status" value="1"/>
</dbReference>
<gene>
    <name evidence="1" type="primary">rhaM</name>
    <name type="ordered locus">LSL_1753</name>
</gene>
<protein>
    <recommendedName>
        <fullName evidence="1">L-rhamnose mutarotase</fullName>
        <ecNumber evidence="1">5.1.3.32</ecNumber>
    </recommendedName>
    <alternativeName>
        <fullName evidence="1">Rhamnose 1-epimerase</fullName>
    </alternativeName>
    <alternativeName>
        <fullName evidence="1">Type-3 mutarotase</fullName>
    </alternativeName>
</protein>
<organism>
    <name type="scientific">Ligilactobacillus salivarius (strain UCC118)</name>
    <name type="common">Lactobacillus salivarius</name>
    <dbReference type="NCBI Taxonomy" id="362948"/>
    <lineage>
        <taxon>Bacteria</taxon>
        <taxon>Bacillati</taxon>
        <taxon>Bacillota</taxon>
        <taxon>Bacilli</taxon>
        <taxon>Lactobacillales</taxon>
        <taxon>Lactobacillaceae</taxon>
        <taxon>Ligilactobacillus</taxon>
    </lineage>
</organism>
<reference key="1">
    <citation type="journal article" date="2006" name="Proc. Natl. Acad. Sci. U.S.A.">
        <title>Multireplicon genome architecture of Lactobacillus salivarius.</title>
        <authorList>
            <person name="Claesson M.J."/>
            <person name="Li Y."/>
            <person name="Leahy S."/>
            <person name="Canchaya C."/>
            <person name="van Pijkeren J.P."/>
            <person name="Cerdeno-Tarraga A.M."/>
            <person name="Parkhill J."/>
            <person name="Flynn S."/>
            <person name="O'Sullivan G.C."/>
            <person name="Collins J.K."/>
            <person name="Higgins D."/>
            <person name="Shanahan F."/>
            <person name="Fitzgerald G.F."/>
            <person name="van Sinderen D."/>
            <person name="O'Toole P.W."/>
        </authorList>
    </citation>
    <scope>NUCLEOTIDE SEQUENCE [LARGE SCALE GENOMIC DNA]</scope>
    <source>
        <strain>UCC118</strain>
    </source>
</reference>
<feature type="chain" id="PRO_0000344583" description="L-rhamnose mutarotase">
    <location>
        <begin position="1"/>
        <end position="108"/>
    </location>
</feature>
<feature type="active site" description="Proton donor" evidence="1">
    <location>
        <position position="23"/>
    </location>
</feature>
<feature type="binding site" evidence="1">
    <location>
        <position position="19"/>
    </location>
    <ligand>
        <name>substrate</name>
    </ligand>
</feature>
<feature type="binding site" evidence="1">
    <location>
        <position position="45"/>
    </location>
    <ligand>
        <name>substrate</name>
    </ligand>
</feature>
<feature type="binding site" evidence="1">
    <location>
        <begin position="80"/>
        <end position="81"/>
    </location>
    <ligand>
        <name>substrate</name>
    </ligand>
</feature>
<evidence type="ECO:0000255" key="1">
    <source>
        <dbReference type="HAMAP-Rule" id="MF_01663"/>
    </source>
</evidence>
<comment type="function">
    <text evidence="1">Involved in the anomeric conversion of L-rhamnose.</text>
</comment>
<comment type="catalytic activity">
    <reaction evidence="1">
        <text>alpha-L-rhamnose = beta-L-rhamnose</text>
        <dbReference type="Rhea" id="RHEA:25584"/>
        <dbReference type="ChEBI" id="CHEBI:27586"/>
        <dbReference type="ChEBI" id="CHEBI:27907"/>
        <dbReference type="EC" id="5.1.3.32"/>
    </reaction>
</comment>
<comment type="pathway">
    <text evidence="1">Carbohydrate metabolism; L-rhamnose metabolism.</text>
</comment>
<comment type="subunit">
    <text evidence="1">Homodimer.</text>
</comment>
<comment type="subcellular location">
    <subcellularLocation>
        <location evidence="1">Cytoplasm</location>
    </subcellularLocation>
</comment>
<comment type="similarity">
    <text evidence="1">Belongs to the rhamnose mutarotase family.</text>
</comment>
<name>RHAM_LIGS1</name>